<dbReference type="EC" id="3.4.25.2" evidence="1"/>
<dbReference type="EMBL" id="AM040264">
    <property type="protein sequence ID" value="CAJ12037.1"/>
    <property type="molecule type" value="Genomic_DNA"/>
</dbReference>
<dbReference type="RefSeq" id="WP_002967033.1">
    <property type="nucleotide sequence ID" value="NZ_KN046823.1"/>
</dbReference>
<dbReference type="SMR" id="Q2YQZ3"/>
<dbReference type="STRING" id="359391.BAB1_2081"/>
<dbReference type="MEROPS" id="T01.006"/>
<dbReference type="GeneID" id="93017609"/>
<dbReference type="KEGG" id="bmf:BAB1_2081"/>
<dbReference type="PATRIC" id="fig|359391.11.peg.1315"/>
<dbReference type="HOGENOM" id="CLU_093872_1_0_5"/>
<dbReference type="PhylomeDB" id="Q2YQZ3"/>
<dbReference type="Proteomes" id="UP000002719">
    <property type="component" value="Chromosome I"/>
</dbReference>
<dbReference type="GO" id="GO:0009376">
    <property type="term" value="C:HslUV protease complex"/>
    <property type="evidence" value="ECO:0007669"/>
    <property type="project" value="UniProtKB-UniRule"/>
</dbReference>
<dbReference type="GO" id="GO:0005839">
    <property type="term" value="C:proteasome core complex"/>
    <property type="evidence" value="ECO:0007669"/>
    <property type="project" value="InterPro"/>
</dbReference>
<dbReference type="GO" id="GO:0046872">
    <property type="term" value="F:metal ion binding"/>
    <property type="evidence" value="ECO:0007669"/>
    <property type="project" value="UniProtKB-KW"/>
</dbReference>
<dbReference type="GO" id="GO:0004298">
    <property type="term" value="F:threonine-type endopeptidase activity"/>
    <property type="evidence" value="ECO:0007669"/>
    <property type="project" value="UniProtKB-KW"/>
</dbReference>
<dbReference type="GO" id="GO:0051603">
    <property type="term" value="P:proteolysis involved in protein catabolic process"/>
    <property type="evidence" value="ECO:0007669"/>
    <property type="project" value="InterPro"/>
</dbReference>
<dbReference type="CDD" id="cd01913">
    <property type="entry name" value="protease_HslV"/>
    <property type="match status" value="1"/>
</dbReference>
<dbReference type="FunFam" id="3.60.20.10:FF:000002">
    <property type="entry name" value="ATP-dependent protease subunit HslV"/>
    <property type="match status" value="1"/>
</dbReference>
<dbReference type="Gene3D" id="3.60.20.10">
    <property type="entry name" value="Glutamine Phosphoribosylpyrophosphate, subunit 1, domain 1"/>
    <property type="match status" value="1"/>
</dbReference>
<dbReference type="HAMAP" id="MF_00248">
    <property type="entry name" value="HslV"/>
    <property type="match status" value="1"/>
</dbReference>
<dbReference type="InterPro" id="IPR022281">
    <property type="entry name" value="ATP-dep_Prtase_HsIV_su"/>
</dbReference>
<dbReference type="InterPro" id="IPR029055">
    <property type="entry name" value="Ntn_hydrolases_N"/>
</dbReference>
<dbReference type="InterPro" id="IPR001353">
    <property type="entry name" value="Proteasome_sua/b"/>
</dbReference>
<dbReference type="InterPro" id="IPR023333">
    <property type="entry name" value="Proteasome_suB-type"/>
</dbReference>
<dbReference type="NCBIfam" id="TIGR03692">
    <property type="entry name" value="ATP_dep_HslV"/>
    <property type="match status" value="1"/>
</dbReference>
<dbReference type="NCBIfam" id="NF003964">
    <property type="entry name" value="PRK05456.1"/>
    <property type="match status" value="1"/>
</dbReference>
<dbReference type="PANTHER" id="PTHR32194:SF7">
    <property type="entry name" value="ATP-DEPENDENT PROTEASE SUBUNIT HSLV"/>
    <property type="match status" value="1"/>
</dbReference>
<dbReference type="PANTHER" id="PTHR32194">
    <property type="entry name" value="METALLOPROTEASE TLDD"/>
    <property type="match status" value="1"/>
</dbReference>
<dbReference type="Pfam" id="PF00227">
    <property type="entry name" value="Proteasome"/>
    <property type="match status" value="1"/>
</dbReference>
<dbReference type="PIRSF" id="PIRSF039093">
    <property type="entry name" value="HslV"/>
    <property type="match status" value="1"/>
</dbReference>
<dbReference type="SUPFAM" id="SSF56235">
    <property type="entry name" value="N-terminal nucleophile aminohydrolases (Ntn hydrolases)"/>
    <property type="match status" value="1"/>
</dbReference>
<dbReference type="PROSITE" id="PS51476">
    <property type="entry name" value="PROTEASOME_BETA_2"/>
    <property type="match status" value="1"/>
</dbReference>
<gene>
    <name evidence="1" type="primary">hslV</name>
    <name type="ordered locus">BAB1_2081</name>
</gene>
<organism>
    <name type="scientific">Brucella abortus (strain 2308)</name>
    <dbReference type="NCBI Taxonomy" id="359391"/>
    <lineage>
        <taxon>Bacteria</taxon>
        <taxon>Pseudomonadati</taxon>
        <taxon>Pseudomonadota</taxon>
        <taxon>Alphaproteobacteria</taxon>
        <taxon>Hyphomicrobiales</taxon>
        <taxon>Brucellaceae</taxon>
        <taxon>Brucella/Ochrobactrum group</taxon>
        <taxon>Brucella</taxon>
    </lineage>
</organism>
<protein>
    <recommendedName>
        <fullName evidence="1">ATP-dependent protease subunit HslV</fullName>
        <ecNumber evidence="1">3.4.25.2</ecNumber>
    </recommendedName>
</protein>
<name>HSLV_BRUA2</name>
<comment type="function">
    <text evidence="1">Protease subunit of a proteasome-like degradation complex believed to be a general protein degrading machinery.</text>
</comment>
<comment type="catalytic activity">
    <reaction evidence="1">
        <text>ATP-dependent cleavage of peptide bonds with broad specificity.</text>
        <dbReference type="EC" id="3.4.25.2"/>
    </reaction>
</comment>
<comment type="activity regulation">
    <text evidence="1">Allosterically activated by HslU binding.</text>
</comment>
<comment type="subunit">
    <text evidence="1">A double ring-shaped homohexamer of HslV is capped on each side by a ring-shaped HslU homohexamer. The assembly of the HslU/HslV complex is dependent on binding of ATP.</text>
</comment>
<comment type="subcellular location">
    <subcellularLocation>
        <location evidence="1">Cytoplasm</location>
    </subcellularLocation>
</comment>
<comment type="similarity">
    <text evidence="1">Belongs to the peptidase T1B family. HslV subfamily.</text>
</comment>
<reference key="1">
    <citation type="journal article" date="2005" name="Infect. Immun.">
        <title>Whole-genome analyses of speciation events in pathogenic Brucellae.</title>
        <authorList>
            <person name="Chain P.S."/>
            <person name="Comerci D.J."/>
            <person name="Tolmasky M.E."/>
            <person name="Larimer F.W."/>
            <person name="Malfatti S.A."/>
            <person name="Vergez L.M."/>
            <person name="Aguero F."/>
            <person name="Land M.L."/>
            <person name="Ugalde R.A."/>
            <person name="Garcia E."/>
        </authorList>
    </citation>
    <scope>NUCLEOTIDE SEQUENCE [LARGE SCALE GENOMIC DNA]</scope>
    <source>
        <strain>2308</strain>
    </source>
</reference>
<evidence type="ECO:0000255" key="1">
    <source>
        <dbReference type="HAMAP-Rule" id="MF_00248"/>
    </source>
</evidence>
<accession>Q2YQZ3</accession>
<sequence>MIEHNPTTIYGTTIVTVRKDGKVVIAGDGQVSLGNTVMKGNARKVRRIGKGNVIAGFAGTTADAFTLLERLEAKLEQYPDQLMRASVELAKDWRTDRYLRKLEAMMLVADSKVTLALTGTGDVLEPEQGVMAIGSGGNYALAAARALIETDKSAEEIARKAMNIAADICIYTNHNIIVESLDAQ</sequence>
<feature type="chain" id="PRO_1000012585" description="ATP-dependent protease subunit HslV">
    <location>
        <begin position="1"/>
        <end position="184"/>
    </location>
</feature>
<feature type="active site" evidence="1">
    <location>
        <position position="12"/>
    </location>
</feature>
<feature type="binding site" evidence="1">
    <location>
        <position position="166"/>
    </location>
    <ligand>
        <name>Na(+)</name>
        <dbReference type="ChEBI" id="CHEBI:29101"/>
    </ligand>
</feature>
<feature type="binding site" evidence="1">
    <location>
        <position position="169"/>
    </location>
    <ligand>
        <name>Na(+)</name>
        <dbReference type="ChEBI" id="CHEBI:29101"/>
    </ligand>
</feature>
<feature type="binding site" evidence="1">
    <location>
        <position position="172"/>
    </location>
    <ligand>
        <name>Na(+)</name>
        <dbReference type="ChEBI" id="CHEBI:29101"/>
    </ligand>
</feature>
<keyword id="KW-0021">Allosteric enzyme</keyword>
<keyword id="KW-0963">Cytoplasm</keyword>
<keyword id="KW-0378">Hydrolase</keyword>
<keyword id="KW-0479">Metal-binding</keyword>
<keyword id="KW-0645">Protease</keyword>
<keyword id="KW-1185">Reference proteome</keyword>
<keyword id="KW-0915">Sodium</keyword>
<keyword id="KW-0888">Threonine protease</keyword>
<proteinExistence type="inferred from homology"/>